<accession>Q827S0</accession>
<keyword id="KW-0028">Amino-acid biosynthesis</keyword>
<keyword id="KW-0057">Aromatic amino acid biosynthesis</keyword>
<keyword id="KW-0274">FAD</keyword>
<keyword id="KW-0285">Flavoprotein</keyword>
<keyword id="KW-0288">FMN</keyword>
<keyword id="KW-0456">Lyase</keyword>
<keyword id="KW-0521">NADP</keyword>
<keyword id="KW-1185">Reference proteome</keyword>
<protein>
    <recommendedName>
        <fullName evidence="1">Chorismate synthase</fullName>
        <shortName evidence="1">CS</shortName>
        <ecNumber evidence="1">4.2.3.5</ecNumber>
    </recommendedName>
    <alternativeName>
        <fullName evidence="1">5-enolpyruvylshikimate-3-phosphate phospholyase</fullName>
    </alternativeName>
</protein>
<gene>
    <name evidence="1" type="primary">aroC</name>
    <name type="ordered locus">SAV_6854</name>
</gene>
<sequence length="394" mass="41644">MSRLRWLTAGESHGPALVATLEGLPAGVPITTDMVADHLARRRLGYGRGARMKFERDEVTFLGGVRHGLTLGSPVAIMVGNTEWPKWEQVMAADPVDPAILADLARNAPLTRPRPGHADLAGMQKYGFDEARPILERASARETAARVALGAVARSYLKETAGIEIVSHVVELAAAKAPYGVYPTPADVEKLDADPVRCLDADASKAMVAEIDQAHKDGDTLGGVVEVLAYDVPVGLGSHVHWDRRLDARLAAALMGIQAIKGVEVGDGFELARVPGSKAHDEIVQTADGVRRTTGRSGGTEGGLTTGELLRVRAAMKPIATVPRALATIDVATGEATKAHHQRSDVCAVPAAGIVAEAMVALVLADAVAEKFGGDSVPETRRNVRSYLDNLVVR</sequence>
<feature type="chain" id="PRO_0000140652" description="Chorismate synthase">
    <location>
        <begin position="1"/>
        <end position="394"/>
    </location>
</feature>
<feature type="binding site" evidence="1">
    <location>
        <position position="42"/>
    </location>
    <ligand>
        <name>NADP(+)</name>
        <dbReference type="ChEBI" id="CHEBI:58349"/>
    </ligand>
</feature>
<feature type="binding site" evidence="1">
    <location>
        <position position="48"/>
    </location>
    <ligand>
        <name>NADP(+)</name>
        <dbReference type="ChEBI" id="CHEBI:58349"/>
    </ligand>
</feature>
<feature type="binding site" evidence="1">
    <location>
        <begin position="137"/>
        <end position="139"/>
    </location>
    <ligand>
        <name>FMN</name>
        <dbReference type="ChEBI" id="CHEBI:58210"/>
    </ligand>
</feature>
<feature type="binding site" evidence="1">
    <location>
        <begin position="258"/>
        <end position="259"/>
    </location>
    <ligand>
        <name>FMN</name>
        <dbReference type="ChEBI" id="CHEBI:58210"/>
    </ligand>
</feature>
<feature type="binding site" evidence="1">
    <location>
        <position position="302"/>
    </location>
    <ligand>
        <name>FMN</name>
        <dbReference type="ChEBI" id="CHEBI:58210"/>
    </ligand>
</feature>
<feature type="binding site" evidence="1">
    <location>
        <begin position="317"/>
        <end position="321"/>
    </location>
    <ligand>
        <name>FMN</name>
        <dbReference type="ChEBI" id="CHEBI:58210"/>
    </ligand>
</feature>
<feature type="binding site" evidence="1">
    <location>
        <position position="343"/>
    </location>
    <ligand>
        <name>FMN</name>
        <dbReference type="ChEBI" id="CHEBI:58210"/>
    </ligand>
</feature>
<name>AROC_STRAW</name>
<proteinExistence type="inferred from homology"/>
<comment type="function">
    <text evidence="1">Catalyzes the anti-1,4-elimination of the C-3 phosphate and the C-6 proR hydrogen from 5-enolpyruvylshikimate-3-phosphate (EPSP) to yield chorismate, which is the branch point compound that serves as the starting substrate for the three terminal pathways of aromatic amino acid biosynthesis. This reaction introduces a second double bond into the aromatic ring system.</text>
</comment>
<comment type="catalytic activity">
    <reaction evidence="1">
        <text>5-O-(1-carboxyvinyl)-3-phosphoshikimate = chorismate + phosphate</text>
        <dbReference type="Rhea" id="RHEA:21020"/>
        <dbReference type="ChEBI" id="CHEBI:29748"/>
        <dbReference type="ChEBI" id="CHEBI:43474"/>
        <dbReference type="ChEBI" id="CHEBI:57701"/>
        <dbReference type="EC" id="4.2.3.5"/>
    </reaction>
</comment>
<comment type="cofactor">
    <cofactor evidence="1">
        <name>FMNH2</name>
        <dbReference type="ChEBI" id="CHEBI:57618"/>
    </cofactor>
    <text evidence="1">Reduced FMN (FMNH(2)).</text>
</comment>
<comment type="pathway">
    <text evidence="1">Metabolic intermediate biosynthesis; chorismate biosynthesis; chorismate from D-erythrose 4-phosphate and phosphoenolpyruvate: step 7/7.</text>
</comment>
<comment type="subunit">
    <text evidence="1">Homotetramer.</text>
</comment>
<comment type="similarity">
    <text evidence="1">Belongs to the chorismate synthase family.</text>
</comment>
<dbReference type="EC" id="4.2.3.5" evidence="1"/>
<dbReference type="EMBL" id="BA000030">
    <property type="protein sequence ID" value="BAC74565.1"/>
    <property type="molecule type" value="Genomic_DNA"/>
</dbReference>
<dbReference type="RefSeq" id="WP_010988252.1">
    <property type="nucleotide sequence ID" value="NZ_JZJK01000082.1"/>
</dbReference>
<dbReference type="SMR" id="Q827S0"/>
<dbReference type="GeneID" id="41543929"/>
<dbReference type="KEGG" id="sma:SAVERM_6854"/>
<dbReference type="eggNOG" id="COG0082">
    <property type="taxonomic scope" value="Bacteria"/>
</dbReference>
<dbReference type="HOGENOM" id="CLU_034547_2_0_11"/>
<dbReference type="OrthoDB" id="9771806at2"/>
<dbReference type="UniPathway" id="UPA00053">
    <property type="reaction ID" value="UER00090"/>
</dbReference>
<dbReference type="Proteomes" id="UP000000428">
    <property type="component" value="Chromosome"/>
</dbReference>
<dbReference type="GO" id="GO:0005829">
    <property type="term" value="C:cytosol"/>
    <property type="evidence" value="ECO:0007669"/>
    <property type="project" value="TreeGrafter"/>
</dbReference>
<dbReference type="GO" id="GO:0004107">
    <property type="term" value="F:chorismate synthase activity"/>
    <property type="evidence" value="ECO:0007669"/>
    <property type="project" value="UniProtKB-UniRule"/>
</dbReference>
<dbReference type="GO" id="GO:0010181">
    <property type="term" value="F:FMN binding"/>
    <property type="evidence" value="ECO:0007669"/>
    <property type="project" value="TreeGrafter"/>
</dbReference>
<dbReference type="GO" id="GO:0008652">
    <property type="term" value="P:amino acid biosynthetic process"/>
    <property type="evidence" value="ECO:0007669"/>
    <property type="project" value="UniProtKB-KW"/>
</dbReference>
<dbReference type="GO" id="GO:0009073">
    <property type="term" value="P:aromatic amino acid family biosynthetic process"/>
    <property type="evidence" value="ECO:0007669"/>
    <property type="project" value="UniProtKB-KW"/>
</dbReference>
<dbReference type="GO" id="GO:0009423">
    <property type="term" value="P:chorismate biosynthetic process"/>
    <property type="evidence" value="ECO:0007669"/>
    <property type="project" value="UniProtKB-UniRule"/>
</dbReference>
<dbReference type="CDD" id="cd07304">
    <property type="entry name" value="Chorismate_synthase"/>
    <property type="match status" value="1"/>
</dbReference>
<dbReference type="FunFam" id="3.60.150.10:FF:000002">
    <property type="entry name" value="Chorismate synthase"/>
    <property type="match status" value="1"/>
</dbReference>
<dbReference type="Gene3D" id="3.60.150.10">
    <property type="entry name" value="Chorismate synthase AroC"/>
    <property type="match status" value="1"/>
</dbReference>
<dbReference type="HAMAP" id="MF_00300">
    <property type="entry name" value="Chorismate_synth"/>
    <property type="match status" value="1"/>
</dbReference>
<dbReference type="InterPro" id="IPR000453">
    <property type="entry name" value="Chorismate_synth"/>
</dbReference>
<dbReference type="InterPro" id="IPR035904">
    <property type="entry name" value="Chorismate_synth_AroC_sf"/>
</dbReference>
<dbReference type="InterPro" id="IPR020541">
    <property type="entry name" value="Chorismate_synthase_CS"/>
</dbReference>
<dbReference type="NCBIfam" id="TIGR00033">
    <property type="entry name" value="aroC"/>
    <property type="match status" value="1"/>
</dbReference>
<dbReference type="NCBIfam" id="NF003793">
    <property type="entry name" value="PRK05382.1"/>
    <property type="match status" value="1"/>
</dbReference>
<dbReference type="PANTHER" id="PTHR21085">
    <property type="entry name" value="CHORISMATE SYNTHASE"/>
    <property type="match status" value="1"/>
</dbReference>
<dbReference type="PANTHER" id="PTHR21085:SF0">
    <property type="entry name" value="CHORISMATE SYNTHASE"/>
    <property type="match status" value="1"/>
</dbReference>
<dbReference type="Pfam" id="PF01264">
    <property type="entry name" value="Chorismate_synt"/>
    <property type="match status" value="1"/>
</dbReference>
<dbReference type="PIRSF" id="PIRSF001456">
    <property type="entry name" value="Chorismate_synth"/>
    <property type="match status" value="1"/>
</dbReference>
<dbReference type="SUPFAM" id="SSF103263">
    <property type="entry name" value="Chorismate synthase, AroC"/>
    <property type="match status" value="1"/>
</dbReference>
<dbReference type="PROSITE" id="PS00787">
    <property type="entry name" value="CHORISMATE_SYNTHASE_1"/>
    <property type="match status" value="1"/>
</dbReference>
<dbReference type="PROSITE" id="PS00788">
    <property type="entry name" value="CHORISMATE_SYNTHASE_2"/>
    <property type="match status" value="1"/>
</dbReference>
<dbReference type="PROSITE" id="PS00789">
    <property type="entry name" value="CHORISMATE_SYNTHASE_3"/>
    <property type="match status" value="1"/>
</dbReference>
<evidence type="ECO:0000255" key="1">
    <source>
        <dbReference type="HAMAP-Rule" id="MF_00300"/>
    </source>
</evidence>
<organism>
    <name type="scientific">Streptomyces avermitilis (strain ATCC 31267 / DSM 46492 / JCM 5070 / NBRC 14893 / NCIMB 12804 / NRRL 8165 / MA-4680)</name>
    <dbReference type="NCBI Taxonomy" id="227882"/>
    <lineage>
        <taxon>Bacteria</taxon>
        <taxon>Bacillati</taxon>
        <taxon>Actinomycetota</taxon>
        <taxon>Actinomycetes</taxon>
        <taxon>Kitasatosporales</taxon>
        <taxon>Streptomycetaceae</taxon>
        <taxon>Streptomyces</taxon>
    </lineage>
</organism>
<reference key="1">
    <citation type="journal article" date="2001" name="Proc. Natl. Acad. Sci. U.S.A.">
        <title>Genome sequence of an industrial microorganism Streptomyces avermitilis: deducing the ability of producing secondary metabolites.</title>
        <authorList>
            <person name="Omura S."/>
            <person name="Ikeda H."/>
            <person name="Ishikawa J."/>
            <person name="Hanamoto A."/>
            <person name="Takahashi C."/>
            <person name="Shinose M."/>
            <person name="Takahashi Y."/>
            <person name="Horikawa H."/>
            <person name="Nakazawa H."/>
            <person name="Osonoe T."/>
            <person name="Kikuchi H."/>
            <person name="Shiba T."/>
            <person name="Sakaki Y."/>
            <person name="Hattori M."/>
        </authorList>
    </citation>
    <scope>NUCLEOTIDE SEQUENCE [LARGE SCALE GENOMIC DNA]</scope>
    <source>
        <strain>ATCC 31267 / DSM 46492 / JCM 5070 / NBRC 14893 / NCIMB 12804 / NRRL 8165 / MA-4680</strain>
    </source>
</reference>
<reference key="2">
    <citation type="journal article" date="2003" name="Nat. Biotechnol.">
        <title>Complete genome sequence and comparative analysis of the industrial microorganism Streptomyces avermitilis.</title>
        <authorList>
            <person name="Ikeda H."/>
            <person name="Ishikawa J."/>
            <person name="Hanamoto A."/>
            <person name="Shinose M."/>
            <person name="Kikuchi H."/>
            <person name="Shiba T."/>
            <person name="Sakaki Y."/>
            <person name="Hattori M."/>
            <person name="Omura S."/>
        </authorList>
    </citation>
    <scope>NUCLEOTIDE SEQUENCE [LARGE SCALE GENOMIC DNA]</scope>
    <source>
        <strain>ATCC 31267 / DSM 46492 / JCM 5070 / NBRC 14893 / NCIMB 12804 / NRRL 8165 / MA-4680</strain>
    </source>
</reference>